<feature type="chain" id="PRO_0000157373" description="Uncharacterized protein CT_085">
    <location>
        <begin position="1"/>
        <end position="579"/>
    </location>
</feature>
<protein>
    <recommendedName>
        <fullName>Uncharacterized protein CT_085</fullName>
    </recommendedName>
</protein>
<comment type="similarity">
    <text evidence="1">Belongs to the UbiD family.</text>
</comment>
<gene>
    <name type="ordered locus">CT_085</name>
</gene>
<name>Y085_CHLTR</name>
<evidence type="ECO:0000305" key="1"/>
<dbReference type="EMBL" id="AE001273">
    <property type="protein sequence ID" value="AAC67676.1"/>
    <property type="molecule type" value="Genomic_DNA"/>
</dbReference>
<dbReference type="PIR" id="E71557">
    <property type="entry name" value="E71557"/>
</dbReference>
<dbReference type="RefSeq" id="NP_219588.1">
    <property type="nucleotide sequence ID" value="NC_000117.1"/>
</dbReference>
<dbReference type="RefSeq" id="WP_009871433.1">
    <property type="nucleotide sequence ID" value="NC_000117.1"/>
</dbReference>
<dbReference type="SMR" id="O84087"/>
<dbReference type="FunCoup" id="O84087">
    <property type="interactions" value="30"/>
</dbReference>
<dbReference type="STRING" id="272561.CT_085"/>
<dbReference type="EnsemblBacteria" id="AAC67676">
    <property type="protein sequence ID" value="AAC67676"/>
    <property type="gene ID" value="CT_085"/>
</dbReference>
<dbReference type="GeneID" id="884138"/>
<dbReference type="KEGG" id="ctr:CT_085"/>
<dbReference type="PATRIC" id="fig|272561.5.peg.93"/>
<dbReference type="HOGENOM" id="CLU_023348_4_1_0"/>
<dbReference type="InParanoid" id="O84087"/>
<dbReference type="OrthoDB" id="9809841at2"/>
<dbReference type="Proteomes" id="UP000000431">
    <property type="component" value="Chromosome"/>
</dbReference>
<dbReference type="GO" id="GO:0005737">
    <property type="term" value="C:cytoplasm"/>
    <property type="evidence" value="ECO:0000318"/>
    <property type="project" value="GO_Central"/>
</dbReference>
<dbReference type="GO" id="GO:0016831">
    <property type="term" value="F:carboxy-lyase activity"/>
    <property type="evidence" value="ECO:0000318"/>
    <property type="project" value="GO_Central"/>
</dbReference>
<dbReference type="FunFam" id="3.40.1670.10:FF:000005">
    <property type="entry name" value="UbiD family decarboxylase"/>
    <property type="match status" value="1"/>
</dbReference>
<dbReference type="Gene3D" id="3.40.1670.10">
    <property type="entry name" value="UbiD C-terminal domain-like"/>
    <property type="match status" value="1"/>
</dbReference>
<dbReference type="InterPro" id="IPR022390">
    <property type="entry name" value="HBDC"/>
</dbReference>
<dbReference type="InterPro" id="IPR002830">
    <property type="entry name" value="UbiD"/>
</dbReference>
<dbReference type="InterPro" id="IPR049381">
    <property type="entry name" value="UbiD-like_C"/>
</dbReference>
<dbReference type="InterPro" id="IPR049383">
    <property type="entry name" value="UbiD-like_N"/>
</dbReference>
<dbReference type="InterPro" id="IPR048304">
    <property type="entry name" value="UbiD_Rift_dom"/>
</dbReference>
<dbReference type="NCBIfam" id="TIGR03701">
    <property type="entry name" value="mena_SCO4490"/>
    <property type="match status" value="1"/>
</dbReference>
<dbReference type="NCBIfam" id="TIGR00148">
    <property type="entry name" value="UbiD family decarboxylase"/>
    <property type="match status" value="1"/>
</dbReference>
<dbReference type="PANTHER" id="PTHR30108">
    <property type="entry name" value="3-OCTAPRENYL-4-HYDROXYBENZOATE CARBOXY-LYASE-RELATED"/>
    <property type="match status" value="1"/>
</dbReference>
<dbReference type="PANTHER" id="PTHR30108:SF7">
    <property type="entry name" value="3-POLYPRENYL-4-HYDROXYBENZOATE DECARBOXYLASE"/>
    <property type="match status" value="1"/>
</dbReference>
<dbReference type="Pfam" id="PF01977">
    <property type="entry name" value="UbiD"/>
    <property type="match status" value="1"/>
</dbReference>
<dbReference type="Pfam" id="PF20696">
    <property type="entry name" value="UbiD_C"/>
    <property type="match status" value="1"/>
</dbReference>
<dbReference type="Pfam" id="PF20695">
    <property type="entry name" value="UbiD_N"/>
    <property type="match status" value="1"/>
</dbReference>
<dbReference type="SUPFAM" id="SSF50475">
    <property type="entry name" value="FMN-binding split barrel"/>
    <property type="match status" value="1"/>
</dbReference>
<dbReference type="SUPFAM" id="SSF143968">
    <property type="entry name" value="UbiD C-terminal domain-like"/>
    <property type="match status" value="2"/>
</dbReference>
<sequence length="579" mass="65354">MFSLRSLVDYLRSQHELIDIHVPVDPHLEIAEIHRRVVEREGPALLFHQVKGSPFPVLTNLFGTRRRVDLLFPDLSSDLFEQIIHLLSSPPSFSSLWKHRSLFKRGISALGMRKRHLRPSPFLYQDAPNLSQLPMLTSWPEDGGPFLTLPLVYTQSPENGVPNLGMYRMQRFDKETLGLHFQIQKGGGAHFFEAEQKKQNLPVTVFLSGNPFLILSAIAPLPENVPELLFCSFLQNKKLSFVEKHPQSGHPLLCDSEFILTGEAVAGERRPEGPFGDHFGYYSLTHDFPIFKCNCLYHKKDAIYPATVVGKPFQEDFFLGNKLQELLSPLFPLIMPGVQDLKSYGEAGFHALAAAIVKERYWKEALRSALRILGEGQLSLTKFLWITDQSVDLENFPSLLECVLERMNFDRDLLILSETANDTLDYTGSGFNKGSKGIFLGVGAPIRSLPRRYRGPSLPGISQIGVFCRGCLVLETSLQQLDIPALLKEPHLADWPLVILVEDLSSALSSTKEFIWRTFTRSSPATDLHIPVSQITNHKVSYTPPMILNALMKPPYPKEVEADEATQNLVSSRWHSYFP</sequence>
<organism>
    <name type="scientific">Chlamydia trachomatis serovar D (strain ATCC VR-885 / DSM 19411 / UW-3/Cx)</name>
    <dbReference type="NCBI Taxonomy" id="272561"/>
    <lineage>
        <taxon>Bacteria</taxon>
        <taxon>Pseudomonadati</taxon>
        <taxon>Chlamydiota</taxon>
        <taxon>Chlamydiia</taxon>
        <taxon>Chlamydiales</taxon>
        <taxon>Chlamydiaceae</taxon>
        <taxon>Chlamydia/Chlamydophila group</taxon>
        <taxon>Chlamydia</taxon>
    </lineage>
</organism>
<reference key="1">
    <citation type="journal article" date="1998" name="Science">
        <title>Genome sequence of an obligate intracellular pathogen of humans: Chlamydia trachomatis.</title>
        <authorList>
            <person name="Stephens R.S."/>
            <person name="Kalman S."/>
            <person name="Lammel C.J."/>
            <person name="Fan J."/>
            <person name="Marathe R."/>
            <person name="Aravind L."/>
            <person name="Mitchell W.P."/>
            <person name="Olinger L."/>
            <person name="Tatusov R.L."/>
            <person name="Zhao Q."/>
            <person name="Koonin E.V."/>
            <person name="Davis R.W."/>
        </authorList>
    </citation>
    <scope>NUCLEOTIDE SEQUENCE [LARGE SCALE GENOMIC DNA]</scope>
    <source>
        <strain>ATCC VR-885 / DSM 19411 / UW-3/Cx</strain>
    </source>
</reference>
<proteinExistence type="inferred from homology"/>
<accession>O84087</accession>
<keyword id="KW-1185">Reference proteome</keyword>